<sequence>MKGQQKVADIEEGTVRVQEEGAVATGEDPTSVAIASIQSAATFSDPNVKYVFRTENGGAQVMYRVIQVAEGQLDGQTEGTGAISGFPATQSMTQAVIQGAFTSDDNGETDASGPETHYTYFPTDSSTSVGGTPTTVVTTHNSDTLLGQAASTGTGQFYVMMSSQDVLQGGSQRSIAPRTHPYSPKSDGPRTTRDDKRRAQHNEVERRRRDKINNWIVQLSKIIPDCSMESTKTGQSKGGILSKACDYIQELRQSNLRLSEELQNLDQLQMDNEVLRQQVEDLKNNNLTLRTQLRHHGVEIIIKSDTH</sequence>
<proteinExistence type="evidence at transcript level"/>
<organism>
    <name type="scientific">Xenopus borealis</name>
    <name type="common">Kenyan clawed frog</name>
    <dbReference type="NCBI Taxonomy" id="8354"/>
    <lineage>
        <taxon>Eukaryota</taxon>
        <taxon>Metazoa</taxon>
        <taxon>Chordata</taxon>
        <taxon>Craniata</taxon>
        <taxon>Vertebrata</taxon>
        <taxon>Euteleostomi</taxon>
        <taxon>Amphibia</taxon>
        <taxon>Batrachia</taxon>
        <taxon>Anura</taxon>
        <taxon>Pipoidea</taxon>
        <taxon>Pipidae</taxon>
        <taxon>Xenopodinae</taxon>
        <taxon>Xenopus</taxon>
        <taxon>Xenopus</taxon>
    </lineage>
</organism>
<evidence type="ECO:0000255" key="1">
    <source>
        <dbReference type="PROSITE-ProRule" id="PRU00981"/>
    </source>
</evidence>
<evidence type="ECO:0000256" key="2">
    <source>
        <dbReference type="SAM" id="MobiDB-lite"/>
    </source>
</evidence>
<dbReference type="EMBL" id="M63663">
    <property type="protein sequence ID" value="AAA49651.1"/>
    <property type="molecule type" value="mRNA"/>
</dbReference>
<dbReference type="EMBL" id="M63664">
    <property type="protein sequence ID" value="AAA49652.1"/>
    <property type="molecule type" value="mRNA"/>
</dbReference>
<dbReference type="PIR" id="A39674">
    <property type="entry name" value="A39674"/>
</dbReference>
<dbReference type="SMR" id="Q07957"/>
<dbReference type="GO" id="GO:0005634">
    <property type="term" value="C:nucleus"/>
    <property type="evidence" value="ECO:0007669"/>
    <property type="project" value="UniProtKB-SubCell"/>
</dbReference>
<dbReference type="GO" id="GO:0000981">
    <property type="term" value="F:DNA-binding transcription factor activity, RNA polymerase II-specific"/>
    <property type="evidence" value="ECO:0007669"/>
    <property type="project" value="TreeGrafter"/>
</dbReference>
<dbReference type="GO" id="GO:0046983">
    <property type="term" value="F:protein dimerization activity"/>
    <property type="evidence" value="ECO:0007669"/>
    <property type="project" value="InterPro"/>
</dbReference>
<dbReference type="GO" id="GO:0000978">
    <property type="term" value="F:RNA polymerase II cis-regulatory region sequence-specific DNA binding"/>
    <property type="evidence" value="ECO:0007669"/>
    <property type="project" value="TreeGrafter"/>
</dbReference>
<dbReference type="GO" id="GO:0045944">
    <property type="term" value="P:positive regulation of transcription by RNA polymerase II"/>
    <property type="evidence" value="ECO:0007669"/>
    <property type="project" value="UniProtKB-ARBA"/>
</dbReference>
<dbReference type="CDD" id="cd18924">
    <property type="entry name" value="bHLHzip_USF1"/>
    <property type="match status" value="1"/>
</dbReference>
<dbReference type="FunFam" id="4.10.280.10:FF:000067">
    <property type="entry name" value="upstream stimulatory factor 1 isoform X1"/>
    <property type="match status" value="1"/>
</dbReference>
<dbReference type="Gene3D" id="4.10.280.10">
    <property type="entry name" value="Helix-loop-helix DNA-binding domain"/>
    <property type="match status" value="1"/>
</dbReference>
<dbReference type="InterPro" id="IPR011598">
    <property type="entry name" value="bHLH_dom"/>
</dbReference>
<dbReference type="InterPro" id="IPR036638">
    <property type="entry name" value="HLH_DNA-bd_sf"/>
</dbReference>
<dbReference type="InterPro" id="IPR051732">
    <property type="entry name" value="USF"/>
</dbReference>
<dbReference type="PANTHER" id="PTHR46117">
    <property type="entry name" value="FI24210P1"/>
    <property type="match status" value="1"/>
</dbReference>
<dbReference type="PANTHER" id="PTHR46117:SF1">
    <property type="entry name" value="UPSTREAM STIMULATORY FACTOR 1"/>
    <property type="match status" value="1"/>
</dbReference>
<dbReference type="Pfam" id="PF00010">
    <property type="entry name" value="HLH"/>
    <property type="match status" value="1"/>
</dbReference>
<dbReference type="SMART" id="SM00353">
    <property type="entry name" value="HLH"/>
    <property type="match status" value="1"/>
</dbReference>
<dbReference type="SUPFAM" id="SSF47459">
    <property type="entry name" value="HLH, helix-loop-helix DNA-binding domain"/>
    <property type="match status" value="1"/>
</dbReference>
<dbReference type="PROSITE" id="PS50888">
    <property type="entry name" value="BHLH"/>
    <property type="match status" value="1"/>
</dbReference>
<feature type="chain" id="PRO_0000127499" description="Upstream stimulatory factor 1">
    <location>
        <begin position="1"/>
        <end position="307"/>
    </location>
</feature>
<feature type="domain" description="bHLH" evidence="1">
    <location>
        <begin position="196"/>
        <end position="251"/>
    </location>
</feature>
<feature type="region of interest" description="Disordered" evidence="2">
    <location>
        <begin position="104"/>
        <end position="131"/>
    </location>
</feature>
<feature type="region of interest" description="Disordered" evidence="2">
    <location>
        <begin position="168"/>
        <end position="207"/>
    </location>
</feature>
<feature type="region of interest" description="Leucine-zipper">
    <location>
        <begin position="268"/>
        <end position="289"/>
    </location>
</feature>
<feature type="compositionally biased region" description="Low complexity" evidence="2">
    <location>
        <begin position="122"/>
        <end position="131"/>
    </location>
</feature>
<feature type="compositionally biased region" description="Basic and acidic residues" evidence="2">
    <location>
        <begin position="187"/>
        <end position="207"/>
    </location>
</feature>
<reference key="1">
    <citation type="journal article" date="1991" name="Mol. Cell. Biol.">
        <title>The Xenopus B1 factor is closely related to the mammalian activator USF and is implicated in the developmental regulation of TFIIIA gene expression.</title>
        <authorList>
            <person name="Kaulen H."/>
            <person name="Pognonec P."/>
            <person name="Gregor P.D."/>
            <person name="Roeder R.G."/>
        </authorList>
    </citation>
    <scope>NUCLEOTIDE SEQUENCE [MRNA]</scope>
    <source>
        <tissue>Ovary</tissue>
    </source>
</reference>
<accession>Q07957</accession>
<keyword id="KW-0238">DNA-binding</keyword>
<keyword id="KW-0539">Nucleus</keyword>
<keyword id="KW-0804">Transcription</keyword>
<keyword id="KW-0805">Transcription regulation</keyword>
<comment type="function">
    <text>May act as a regulator of transcription factor IIIA (TFIIIA) gene expression.</text>
</comment>
<comment type="subunit">
    <text>Efficient DNA binding requires dimerization with another bHLH protein. Binds DNA as a homodimer or a heterodimer.</text>
</comment>
<comment type="subcellular location">
    <subcellularLocation>
        <location>Nucleus</location>
    </subcellularLocation>
</comment>
<comment type="tissue specificity">
    <text>Oocyte and somatic tissue. Oocytic and somatic forms of this protein exist, probably as a result of post-translational modifications or minor splicing differences.</text>
</comment>
<comment type="developmental stage">
    <text>In the oocyte, the protein accumulates from stage 1 to stage 5/6 of oogenesis and persists through gastrulation while the somatic protein begins to accumulate at early cleavage and, by the neurula stage, is the dominant, if not exclusive, form present.</text>
</comment>
<protein>
    <recommendedName>
        <fullName>Upstream stimulatory factor 1</fullName>
        <shortName>USF</shortName>
    </recommendedName>
    <alternativeName>
        <fullName>B1 factor</fullName>
    </alternativeName>
    <alternativeName>
        <fullName>SPF1</fullName>
    </alternativeName>
</protein>
<name>USF1_XENBO</name>
<gene>
    <name type="primary">usf1</name>
</gene>